<gene>
    <name evidence="1" type="primary">WDY</name>
    <name type="ORF">GL16195</name>
</gene>
<evidence type="ECO:0000250" key="1">
    <source>
        <dbReference type="UniProtKB" id="B4F7L9"/>
    </source>
</evidence>
<evidence type="ECO:0000255" key="2"/>
<evidence type="ECO:0000256" key="3">
    <source>
        <dbReference type="SAM" id="MobiDB-lite"/>
    </source>
</evidence>
<evidence type="ECO:0000305" key="4"/>
<evidence type="ECO:0000312" key="5">
    <source>
        <dbReference type="EMBL" id="EDW39869.1"/>
    </source>
</evidence>
<proteinExistence type="predicted"/>
<name>WDY_DROPE</name>
<comment type="sequence caution" evidence="4">
    <conflict type="erroneous gene model prediction">
        <sequence resource="EMBL-CDS" id="EDW39869"/>
    </conflict>
</comment>
<sequence>MIFNASQDSKTEIEYQTISSTQTYLAEEQSERLHNLISKEQLEKLNQAFNERPDSQVGFDDLRGLLLEQDITFNDAVYNRLFLKINQNRDFMVDWNEFVSYLIFGFQEEDPSSQKESLILPISVAPSVRKTEHRSTVCCVALLKAKSDQVPIEEVTETVNFSFGGEDSPEASGMWVTASHEGMLRFWTSHMEPIRTATSESSKPHAVYCMSYAFYNNGKVHSKLVLGDYAGNVRILSYSPNLRGPFQAKPGAALIEVVWADVLKGKIPQMIPKEYINLHNEMISCVHYSLHMNALFATAEYRNTKKYRGRCPGMIMVTYDERSNFRVPLGVSTFFVAESHNIVVTGGPDTFVRIWDVYIPTEPSAILTGHNGGIVMVFVQPEENKVYSVDYQKIIKVWDLQEHTLLQTYGELVRLIHPSETDMTYFYHSHLRELIVAGRKLISIKCCPRVRVDLTDGNTHAAPVSVVLYNRLFRNIVTCGLDSYIIVWDPWSGRRKIIMKNCHTKMIYGEIIDIEITAATFDPLEQFLLTGARDGTLKIWNYNNAVVVRNMSIMPDQEVTSVIWVVDRILAMGWDRQVTEFNDVEGREYGDPKKWSKFHTDDITCADVKLGEGVVTATYSGEVIFWKLETGQPYRRYSVMDPTRFIELKLTPEEEKLMRRSKRLMSRLGSSRMSRATAITMPKADDGRDYGQNVPISVQAVLFLQTRPQTIQHGSVFISLDTGYIQVYSHHSRGGYMSQFLSVHKTGDCVLTMCTDRKNRYIYTGTAFGYIKVWHIVNYCVPEAEKVHVCMPRLRLEFIFMRKEFWVTRAKRVVRHQREPLLVSSYKAHLKAINSIAFINLPKIVFSGSHDYSCRLWTQGGRYLGTLGTVLPWSKLSPFERAGSENQVYRLPPDIKKVASSTTLKVISGVQMDRPAKRAEVKAPEDRDEETAQTDDGYDLKKIFDKPLKEPILGKHFTLPGKSVMDQRIDVDTTQSYIAVYTHLKVHHTEMLERLPTPAVISRVAGENYMDHYVPVEGKVDLSGSALNIKQPPRRNVRPNDPRNMRMAKTRGDMGPGPSPSQQSE</sequence>
<keyword id="KW-1185">Reference proteome</keyword>
<keyword id="KW-0677">Repeat</keyword>
<keyword id="KW-0853">WD repeat</keyword>
<reference evidence="5" key="1">
    <citation type="journal article" date="2007" name="Nature">
        <title>Evolution of genes and genomes on the Drosophila phylogeny.</title>
        <authorList>
            <consortium name="Drosophila 12 genomes consortium"/>
        </authorList>
    </citation>
    <scope>NUCLEOTIDE SEQUENCE [LARGE SCALE GENOMIC DNA]</scope>
    <source>
        <strain>MSH-3 / Tucson 14011-0111.49</strain>
    </source>
</reference>
<protein>
    <recommendedName>
        <fullName evidence="1">WD repeat-containing protein on Y chromosome</fullName>
        <shortName evidence="1">WD40 Y</shortName>
    </recommendedName>
</protein>
<organism>
    <name type="scientific">Drosophila persimilis</name>
    <name type="common">Fruit fly</name>
    <dbReference type="NCBI Taxonomy" id="7234"/>
    <lineage>
        <taxon>Eukaryota</taxon>
        <taxon>Metazoa</taxon>
        <taxon>Ecdysozoa</taxon>
        <taxon>Arthropoda</taxon>
        <taxon>Hexapoda</taxon>
        <taxon>Insecta</taxon>
        <taxon>Pterygota</taxon>
        <taxon>Neoptera</taxon>
        <taxon>Endopterygota</taxon>
        <taxon>Diptera</taxon>
        <taxon>Brachycera</taxon>
        <taxon>Muscomorpha</taxon>
        <taxon>Ephydroidea</taxon>
        <taxon>Drosophilidae</taxon>
        <taxon>Drosophila</taxon>
        <taxon>Sophophora</taxon>
    </lineage>
</organism>
<dbReference type="EMBL" id="CH479187">
    <property type="protein sequence ID" value="EDW39869.1"/>
    <property type="status" value="ALT_SEQ"/>
    <property type="molecule type" value="Genomic_DNA"/>
</dbReference>
<dbReference type="RefSeq" id="XP_002020876.1">
    <property type="nucleotide sequence ID" value="XM_002020840.1"/>
</dbReference>
<dbReference type="STRING" id="7234.B4GQJ7"/>
<dbReference type="EnsemblMetazoa" id="FBtr0181799">
    <property type="protein sequence ID" value="FBpp0180291"/>
    <property type="gene ID" value="FBgn0153788"/>
</dbReference>
<dbReference type="EnsemblMetazoa" id="FBtr0181810">
    <property type="protein sequence ID" value="FBpp0180302"/>
    <property type="gene ID" value="FBgn0153799"/>
</dbReference>
<dbReference type="GeneID" id="6595403"/>
<dbReference type="KEGG" id="dpe:6595403"/>
<dbReference type="eggNOG" id="KOG3184">
    <property type="taxonomic scope" value="Eukaryota"/>
</dbReference>
<dbReference type="OrthoDB" id="5980302at2759"/>
<dbReference type="ChiTaRS" id="WDY">
    <property type="organism name" value="fly"/>
</dbReference>
<dbReference type="Proteomes" id="UP000008744">
    <property type="component" value="Unassembled WGS sequence"/>
</dbReference>
<dbReference type="Gene3D" id="2.130.10.10">
    <property type="entry name" value="YVTN repeat-like/Quinoprotein amine dehydrogenase"/>
    <property type="match status" value="2"/>
</dbReference>
<dbReference type="InterPro" id="IPR011992">
    <property type="entry name" value="EF-hand-dom_pair"/>
</dbReference>
<dbReference type="InterPro" id="IPR011041">
    <property type="entry name" value="Quinoprot_gluc/sorb_DH_b-prop"/>
</dbReference>
<dbReference type="InterPro" id="IPR051242">
    <property type="entry name" value="WD-EF-hand_domain"/>
</dbReference>
<dbReference type="InterPro" id="IPR015943">
    <property type="entry name" value="WD40/YVTN_repeat-like_dom_sf"/>
</dbReference>
<dbReference type="InterPro" id="IPR036322">
    <property type="entry name" value="WD40_repeat_dom_sf"/>
</dbReference>
<dbReference type="InterPro" id="IPR001680">
    <property type="entry name" value="WD40_rpt"/>
</dbReference>
<dbReference type="PANTHER" id="PTHR44324:SF6">
    <property type="entry name" value="EF-HAND CALCIUM BINDING DOMAIN 8"/>
    <property type="match status" value="1"/>
</dbReference>
<dbReference type="PANTHER" id="PTHR44324">
    <property type="entry name" value="WD40 REPEAT DOMAIN 95"/>
    <property type="match status" value="1"/>
</dbReference>
<dbReference type="Pfam" id="PF00400">
    <property type="entry name" value="WD40"/>
    <property type="match status" value="2"/>
</dbReference>
<dbReference type="SMART" id="SM00320">
    <property type="entry name" value="WD40"/>
    <property type="match status" value="8"/>
</dbReference>
<dbReference type="SUPFAM" id="SSF47473">
    <property type="entry name" value="EF-hand"/>
    <property type="match status" value="1"/>
</dbReference>
<dbReference type="SUPFAM" id="SSF50952">
    <property type="entry name" value="Soluble quinoprotein glucose dehydrogenase"/>
    <property type="match status" value="1"/>
</dbReference>
<dbReference type="SUPFAM" id="SSF50978">
    <property type="entry name" value="WD40 repeat-like"/>
    <property type="match status" value="1"/>
</dbReference>
<dbReference type="PROSITE" id="PS00678">
    <property type="entry name" value="WD_REPEATS_1"/>
    <property type="match status" value="1"/>
</dbReference>
<dbReference type="PROSITE" id="PS50082">
    <property type="entry name" value="WD_REPEATS_2"/>
    <property type="match status" value="4"/>
</dbReference>
<dbReference type="PROSITE" id="PS50294">
    <property type="entry name" value="WD_REPEATS_REGION"/>
    <property type="match status" value="1"/>
</dbReference>
<feature type="chain" id="PRO_0000377423" description="WD repeat-containing protein on Y chromosome">
    <location>
        <begin position="1"/>
        <end position="1065"/>
    </location>
</feature>
<feature type="repeat" description="WD 1" evidence="2">
    <location>
        <begin position="153"/>
        <end position="197"/>
    </location>
</feature>
<feature type="repeat" description="WD 2" evidence="2">
    <location>
        <begin position="326"/>
        <end position="365"/>
    </location>
</feature>
<feature type="repeat" description="WD 3" evidence="2">
    <location>
        <begin position="369"/>
        <end position="408"/>
    </location>
</feature>
<feature type="repeat" description="WD 4" evidence="2">
    <location>
        <begin position="459"/>
        <end position="498"/>
    </location>
</feature>
<feature type="repeat" description="WD 5" evidence="2">
    <location>
        <begin position="511"/>
        <end position="550"/>
    </location>
</feature>
<feature type="repeat" description="WD 6" evidence="2">
    <location>
        <begin position="598"/>
        <end position="638"/>
    </location>
</feature>
<feature type="repeat" description="WD 7" evidence="2">
    <location>
        <begin position="745"/>
        <end position="784"/>
    </location>
</feature>
<feature type="repeat" description="WD 8" evidence="2">
    <location>
        <begin position="828"/>
        <end position="867"/>
    </location>
</feature>
<feature type="region of interest" description="Disordered" evidence="3">
    <location>
        <begin position="915"/>
        <end position="936"/>
    </location>
</feature>
<feature type="region of interest" description="Disordered" evidence="3">
    <location>
        <begin position="1024"/>
        <end position="1065"/>
    </location>
</feature>
<feature type="compositionally biased region" description="Basic and acidic residues" evidence="3">
    <location>
        <begin position="915"/>
        <end position="925"/>
    </location>
</feature>
<feature type="compositionally biased region" description="Acidic residues" evidence="3">
    <location>
        <begin position="926"/>
        <end position="936"/>
    </location>
</feature>
<accession>B4GQJ7</accession>